<comment type="function">
    <text evidence="1">Nucleotidyltransferase involved in the post-translational modification of proteins. It can catalyze the addition of adenosine monophosphate (AMP) or uridine monophosphate (UMP) to a protein, resulting in modifications known as AMPylation and UMPylation.</text>
</comment>
<comment type="catalytic activity">
    <reaction evidence="1">
        <text>L-seryl-[protein] + ATP = 3-O-(5'-adenylyl)-L-seryl-[protein] + diphosphate</text>
        <dbReference type="Rhea" id="RHEA:58120"/>
        <dbReference type="Rhea" id="RHEA-COMP:9863"/>
        <dbReference type="Rhea" id="RHEA-COMP:15073"/>
        <dbReference type="ChEBI" id="CHEBI:29999"/>
        <dbReference type="ChEBI" id="CHEBI:30616"/>
        <dbReference type="ChEBI" id="CHEBI:33019"/>
        <dbReference type="ChEBI" id="CHEBI:142516"/>
        <dbReference type="EC" id="2.7.7.108"/>
    </reaction>
</comment>
<comment type="catalytic activity">
    <reaction evidence="1">
        <text>L-threonyl-[protein] + ATP = 3-O-(5'-adenylyl)-L-threonyl-[protein] + diphosphate</text>
        <dbReference type="Rhea" id="RHEA:54292"/>
        <dbReference type="Rhea" id="RHEA-COMP:11060"/>
        <dbReference type="Rhea" id="RHEA-COMP:13847"/>
        <dbReference type="ChEBI" id="CHEBI:30013"/>
        <dbReference type="ChEBI" id="CHEBI:30616"/>
        <dbReference type="ChEBI" id="CHEBI:33019"/>
        <dbReference type="ChEBI" id="CHEBI:138113"/>
        <dbReference type="EC" id="2.7.7.108"/>
    </reaction>
</comment>
<comment type="catalytic activity">
    <reaction evidence="1">
        <text>L-tyrosyl-[protein] + ATP = O-(5'-adenylyl)-L-tyrosyl-[protein] + diphosphate</text>
        <dbReference type="Rhea" id="RHEA:54288"/>
        <dbReference type="Rhea" id="RHEA-COMP:10136"/>
        <dbReference type="Rhea" id="RHEA-COMP:13846"/>
        <dbReference type="ChEBI" id="CHEBI:30616"/>
        <dbReference type="ChEBI" id="CHEBI:33019"/>
        <dbReference type="ChEBI" id="CHEBI:46858"/>
        <dbReference type="ChEBI" id="CHEBI:83624"/>
        <dbReference type="EC" id="2.7.7.108"/>
    </reaction>
</comment>
<comment type="catalytic activity">
    <reaction evidence="1">
        <text>L-histidyl-[protein] + UTP = N(tele)-(5'-uridylyl)-L-histidyl-[protein] + diphosphate</text>
        <dbReference type="Rhea" id="RHEA:83891"/>
        <dbReference type="Rhea" id="RHEA-COMP:9745"/>
        <dbReference type="Rhea" id="RHEA-COMP:20239"/>
        <dbReference type="ChEBI" id="CHEBI:29979"/>
        <dbReference type="ChEBI" id="CHEBI:33019"/>
        <dbReference type="ChEBI" id="CHEBI:46398"/>
        <dbReference type="ChEBI" id="CHEBI:233474"/>
    </reaction>
</comment>
<comment type="catalytic activity">
    <reaction evidence="1">
        <text>L-seryl-[protein] + UTP = O-(5'-uridylyl)-L-seryl-[protein] + diphosphate</text>
        <dbReference type="Rhea" id="RHEA:64604"/>
        <dbReference type="Rhea" id="RHEA-COMP:9863"/>
        <dbReference type="Rhea" id="RHEA-COMP:16635"/>
        <dbReference type="ChEBI" id="CHEBI:29999"/>
        <dbReference type="ChEBI" id="CHEBI:33019"/>
        <dbReference type="ChEBI" id="CHEBI:46398"/>
        <dbReference type="ChEBI" id="CHEBI:156051"/>
    </reaction>
</comment>
<comment type="catalytic activity">
    <reaction evidence="1">
        <text>L-tyrosyl-[protein] + UTP = O-(5'-uridylyl)-L-tyrosyl-[protein] + diphosphate</text>
        <dbReference type="Rhea" id="RHEA:83887"/>
        <dbReference type="Rhea" id="RHEA-COMP:10136"/>
        <dbReference type="Rhea" id="RHEA-COMP:20238"/>
        <dbReference type="ChEBI" id="CHEBI:33019"/>
        <dbReference type="ChEBI" id="CHEBI:46398"/>
        <dbReference type="ChEBI" id="CHEBI:46858"/>
        <dbReference type="ChEBI" id="CHEBI:90602"/>
    </reaction>
</comment>
<comment type="cofactor">
    <cofactor evidence="1">
        <name>Mg(2+)</name>
        <dbReference type="ChEBI" id="CHEBI:18420"/>
    </cofactor>
    <cofactor evidence="1">
        <name>Mn(2+)</name>
        <dbReference type="ChEBI" id="CHEBI:29035"/>
    </cofactor>
</comment>
<comment type="similarity">
    <text evidence="1">Belongs to the SELO family.</text>
</comment>
<reference key="1">
    <citation type="submission" date="2007-12" db="EMBL/GenBank/DDBJ databases">
        <title>Complete sequence of Methylobacterium extorquens PA1.</title>
        <authorList>
            <consortium name="US DOE Joint Genome Institute"/>
            <person name="Copeland A."/>
            <person name="Lucas S."/>
            <person name="Lapidus A."/>
            <person name="Barry K."/>
            <person name="Glavina del Rio T."/>
            <person name="Dalin E."/>
            <person name="Tice H."/>
            <person name="Pitluck S."/>
            <person name="Saunders E."/>
            <person name="Brettin T."/>
            <person name="Bruce D."/>
            <person name="Detter J.C."/>
            <person name="Han C."/>
            <person name="Schmutz J."/>
            <person name="Larimer F."/>
            <person name="Land M."/>
            <person name="Hauser L."/>
            <person name="Kyrpides N."/>
            <person name="Kim E."/>
            <person name="Marx C."/>
            <person name="Richardson P."/>
        </authorList>
    </citation>
    <scope>NUCLEOTIDE SEQUENCE [LARGE SCALE GENOMIC DNA]</scope>
    <source>
        <strain>PA1</strain>
    </source>
</reference>
<name>SELO_METEP</name>
<protein>
    <recommendedName>
        <fullName evidence="1">Protein nucleotidyltransferase YdiU</fullName>
        <ecNumber evidence="1">2.7.7.-</ecNumber>
    </recommendedName>
    <alternativeName>
        <fullName evidence="1">Protein adenylyltransferase YdiU</fullName>
        <ecNumber evidence="1">2.7.7.108</ecNumber>
    </alternativeName>
    <alternativeName>
        <fullName evidence="1">Protein uridylyltransferase YdiU</fullName>
        <ecNumber evidence="1">2.7.7.-</ecNumber>
    </alternativeName>
</protein>
<evidence type="ECO:0000255" key="1">
    <source>
        <dbReference type="HAMAP-Rule" id="MF_00692"/>
    </source>
</evidence>
<evidence type="ECO:0000256" key="2">
    <source>
        <dbReference type="SAM" id="MobiDB-lite"/>
    </source>
</evidence>
<sequence>MTALFPFDNSYARLPSHFFGRVAPTAVEAPRLIRLNRALAVDLGLDPDRLESPEGVEVLAGQRVPEGAEPLAAAYAGHQFGQFVPQLGDGRAILLGEVVGRDGRRDIQLKGSGPTPFSRRGDGRAALGPVLREYLVSEAMHALGIPTTRALAAVTTGEQVIRETALPGAVLTRVASSHIRVGSFQFFAARGDVEGLRALADHAIARHDPEAARADNPYRALLDGVIRRQAALVARWLTVGFIHGVMNTDNMSIAGETIDYGPCAFLDTYDPATAFSSIDRHGRYAYGNQPRIALWNLTRLAEALLPLLSEDETQAVGEAEAALTGFAGQFEAAYHGGLNRKLGLATTRDGDPALAGDLLKTMAENEADFTLTFRRLGEAVPGPDGEPDPAAVEAVRSLFIDPTAYDRWAEGWRRRLKDEAGDAAARRQMMRAANPAFILRNHRVEEMITAAVERQDFAPFETLLTVLARPYEDQPDFARYAEPPEGGGRGYRTFCGT</sequence>
<organism>
    <name type="scientific">Methylorubrum extorquens (strain PA1)</name>
    <name type="common">Methylobacterium extorquens</name>
    <dbReference type="NCBI Taxonomy" id="419610"/>
    <lineage>
        <taxon>Bacteria</taxon>
        <taxon>Pseudomonadati</taxon>
        <taxon>Pseudomonadota</taxon>
        <taxon>Alphaproteobacteria</taxon>
        <taxon>Hyphomicrobiales</taxon>
        <taxon>Methylobacteriaceae</taxon>
        <taxon>Methylorubrum</taxon>
    </lineage>
</organism>
<dbReference type="EC" id="2.7.7.-" evidence="1"/>
<dbReference type="EC" id="2.7.7.108" evidence="1"/>
<dbReference type="EMBL" id="CP000908">
    <property type="protein sequence ID" value="ABY33231.1"/>
    <property type="molecule type" value="Genomic_DNA"/>
</dbReference>
<dbReference type="RefSeq" id="WP_012255890.1">
    <property type="nucleotide sequence ID" value="NC_010172.1"/>
</dbReference>
<dbReference type="SMR" id="A9W9J2"/>
<dbReference type="KEGG" id="mex:Mext_4863"/>
<dbReference type="eggNOG" id="COG0397">
    <property type="taxonomic scope" value="Bacteria"/>
</dbReference>
<dbReference type="HOGENOM" id="CLU_010245_4_1_5"/>
<dbReference type="BioCyc" id="MEXT419610:MEXT_RS24435-MONOMER"/>
<dbReference type="GO" id="GO:0070733">
    <property type="term" value="F:AMPylase activity"/>
    <property type="evidence" value="ECO:0007669"/>
    <property type="project" value="RHEA"/>
</dbReference>
<dbReference type="GO" id="GO:0005524">
    <property type="term" value="F:ATP binding"/>
    <property type="evidence" value="ECO:0007669"/>
    <property type="project" value="UniProtKB-UniRule"/>
</dbReference>
<dbReference type="GO" id="GO:0000287">
    <property type="term" value="F:magnesium ion binding"/>
    <property type="evidence" value="ECO:0007669"/>
    <property type="project" value="UniProtKB-UniRule"/>
</dbReference>
<dbReference type="HAMAP" id="MF_00692">
    <property type="entry name" value="YdiU_SelO"/>
    <property type="match status" value="1"/>
</dbReference>
<dbReference type="InterPro" id="IPR011009">
    <property type="entry name" value="Kinase-like_dom_sf"/>
</dbReference>
<dbReference type="InterPro" id="IPR003846">
    <property type="entry name" value="SelO"/>
</dbReference>
<dbReference type="NCBIfam" id="NF000658">
    <property type="entry name" value="PRK00029.1"/>
    <property type="match status" value="1"/>
</dbReference>
<dbReference type="PANTHER" id="PTHR32057">
    <property type="entry name" value="PROTEIN ADENYLYLTRANSFERASE SELO, MITOCHONDRIAL"/>
    <property type="match status" value="1"/>
</dbReference>
<dbReference type="PANTHER" id="PTHR32057:SF14">
    <property type="entry name" value="PROTEIN ADENYLYLTRANSFERASE SELO, MITOCHONDRIAL"/>
    <property type="match status" value="1"/>
</dbReference>
<dbReference type="Pfam" id="PF02696">
    <property type="entry name" value="SelO"/>
    <property type="match status" value="1"/>
</dbReference>
<dbReference type="SUPFAM" id="SSF56112">
    <property type="entry name" value="Protein kinase-like (PK-like)"/>
    <property type="match status" value="1"/>
</dbReference>
<keyword id="KW-0067">ATP-binding</keyword>
<keyword id="KW-0460">Magnesium</keyword>
<keyword id="KW-0464">Manganese</keyword>
<keyword id="KW-0479">Metal-binding</keyword>
<keyword id="KW-0547">Nucleotide-binding</keyword>
<keyword id="KW-0548">Nucleotidyltransferase</keyword>
<keyword id="KW-0808">Transferase</keyword>
<feature type="chain" id="PRO_1000132114" description="Protein nucleotidyltransferase YdiU">
    <location>
        <begin position="1"/>
        <end position="497"/>
    </location>
</feature>
<feature type="region of interest" description="Disordered" evidence="2">
    <location>
        <begin position="477"/>
        <end position="497"/>
    </location>
</feature>
<feature type="active site" description="Proton acceptor" evidence="1">
    <location>
        <position position="249"/>
    </location>
</feature>
<feature type="binding site" evidence="1">
    <location>
        <position position="88"/>
    </location>
    <ligand>
        <name>ATP</name>
        <dbReference type="ChEBI" id="CHEBI:30616"/>
    </ligand>
</feature>
<feature type="binding site" evidence="1">
    <location>
        <position position="90"/>
    </location>
    <ligand>
        <name>ATP</name>
        <dbReference type="ChEBI" id="CHEBI:30616"/>
    </ligand>
</feature>
<feature type="binding site" evidence="1">
    <location>
        <position position="91"/>
    </location>
    <ligand>
        <name>ATP</name>
        <dbReference type="ChEBI" id="CHEBI:30616"/>
    </ligand>
</feature>
<feature type="binding site" evidence="1">
    <location>
        <position position="110"/>
    </location>
    <ligand>
        <name>ATP</name>
        <dbReference type="ChEBI" id="CHEBI:30616"/>
    </ligand>
</feature>
<feature type="binding site" evidence="1">
    <location>
        <position position="122"/>
    </location>
    <ligand>
        <name>ATP</name>
        <dbReference type="ChEBI" id="CHEBI:30616"/>
    </ligand>
</feature>
<feature type="binding site" evidence="1">
    <location>
        <position position="123"/>
    </location>
    <ligand>
        <name>ATP</name>
        <dbReference type="ChEBI" id="CHEBI:30616"/>
    </ligand>
</feature>
<feature type="binding site" evidence="1">
    <location>
        <position position="173"/>
    </location>
    <ligand>
        <name>ATP</name>
        <dbReference type="ChEBI" id="CHEBI:30616"/>
    </ligand>
</feature>
<feature type="binding site" evidence="1">
    <location>
        <position position="180"/>
    </location>
    <ligand>
        <name>ATP</name>
        <dbReference type="ChEBI" id="CHEBI:30616"/>
    </ligand>
</feature>
<feature type="binding site" evidence="1">
    <location>
        <position position="250"/>
    </location>
    <ligand>
        <name>Mg(2+)</name>
        <dbReference type="ChEBI" id="CHEBI:18420"/>
    </ligand>
</feature>
<feature type="binding site" evidence="1">
    <location>
        <position position="259"/>
    </location>
    <ligand>
        <name>ATP</name>
        <dbReference type="ChEBI" id="CHEBI:30616"/>
    </ligand>
</feature>
<feature type="binding site" evidence="1">
    <location>
        <position position="259"/>
    </location>
    <ligand>
        <name>Mg(2+)</name>
        <dbReference type="ChEBI" id="CHEBI:18420"/>
    </ligand>
</feature>
<gene>
    <name evidence="1" type="primary">ydiU</name>
    <name evidence="1" type="synonym">selO</name>
    <name type="ordered locus">Mext_4863</name>
</gene>
<accession>A9W9J2</accession>
<proteinExistence type="inferred from homology"/>